<dbReference type="EMBL" id="U30267">
    <property type="protein sequence ID" value="AAC59748.1"/>
    <property type="molecule type" value="mRNA"/>
</dbReference>
<dbReference type="EMBL" id="X92399">
    <property type="protein sequence ID" value="CAA63136.1"/>
    <property type="molecule type" value="mRNA"/>
</dbReference>
<dbReference type="PIR" id="S68174">
    <property type="entry name" value="S68174"/>
</dbReference>
<dbReference type="SMR" id="P51478"/>
<dbReference type="GO" id="GO:0001917">
    <property type="term" value="C:photoreceptor inner segment"/>
    <property type="evidence" value="ECO:0007669"/>
    <property type="project" value="TreeGrafter"/>
</dbReference>
<dbReference type="GO" id="GO:0001750">
    <property type="term" value="C:photoreceptor outer segment"/>
    <property type="evidence" value="ECO:0007669"/>
    <property type="project" value="TreeGrafter"/>
</dbReference>
<dbReference type="GO" id="GO:0001664">
    <property type="term" value="F:G protein-coupled receptor binding"/>
    <property type="evidence" value="ECO:0007669"/>
    <property type="project" value="TreeGrafter"/>
</dbReference>
<dbReference type="GO" id="GO:0002031">
    <property type="term" value="P:G protein-coupled receptor internalization"/>
    <property type="evidence" value="ECO:0007669"/>
    <property type="project" value="TreeGrafter"/>
</dbReference>
<dbReference type="GO" id="GO:0007165">
    <property type="term" value="P:signal transduction"/>
    <property type="evidence" value="ECO:0007669"/>
    <property type="project" value="InterPro"/>
</dbReference>
<dbReference type="GO" id="GO:0007601">
    <property type="term" value="P:visual perception"/>
    <property type="evidence" value="ECO:0007669"/>
    <property type="project" value="UniProtKB-KW"/>
</dbReference>
<dbReference type="FunFam" id="2.60.40.840:FF:000002">
    <property type="entry name" value="Arrestin 3"/>
    <property type="match status" value="1"/>
</dbReference>
<dbReference type="FunFam" id="2.60.40.640:FF:000011">
    <property type="entry name" value="S-arrestin isoform X2"/>
    <property type="match status" value="1"/>
</dbReference>
<dbReference type="Gene3D" id="2.60.40.640">
    <property type="match status" value="1"/>
</dbReference>
<dbReference type="Gene3D" id="2.60.40.840">
    <property type="match status" value="1"/>
</dbReference>
<dbReference type="InterPro" id="IPR000698">
    <property type="entry name" value="Arrestin"/>
</dbReference>
<dbReference type="InterPro" id="IPR014752">
    <property type="entry name" value="Arrestin-like_C"/>
</dbReference>
<dbReference type="InterPro" id="IPR011021">
    <property type="entry name" value="Arrestin-like_N"/>
</dbReference>
<dbReference type="InterPro" id="IPR011022">
    <property type="entry name" value="Arrestin_C-like"/>
</dbReference>
<dbReference type="InterPro" id="IPR017864">
    <property type="entry name" value="Arrestin_CS"/>
</dbReference>
<dbReference type="InterPro" id="IPR014753">
    <property type="entry name" value="Arrestin_N"/>
</dbReference>
<dbReference type="InterPro" id="IPR014756">
    <property type="entry name" value="Ig_E-set"/>
</dbReference>
<dbReference type="PANTHER" id="PTHR11792">
    <property type="entry name" value="ARRESTIN"/>
    <property type="match status" value="1"/>
</dbReference>
<dbReference type="PANTHER" id="PTHR11792:SF15">
    <property type="entry name" value="S-ARRESTIN"/>
    <property type="match status" value="1"/>
</dbReference>
<dbReference type="Pfam" id="PF02752">
    <property type="entry name" value="Arrestin_C"/>
    <property type="match status" value="1"/>
</dbReference>
<dbReference type="Pfam" id="PF00339">
    <property type="entry name" value="Arrestin_N"/>
    <property type="match status" value="1"/>
</dbReference>
<dbReference type="PRINTS" id="PR00309">
    <property type="entry name" value="ARRESTIN"/>
</dbReference>
<dbReference type="SMART" id="SM01017">
    <property type="entry name" value="Arrestin_C"/>
    <property type="match status" value="1"/>
</dbReference>
<dbReference type="SUPFAM" id="SSF81296">
    <property type="entry name" value="E set domains"/>
    <property type="match status" value="2"/>
</dbReference>
<dbReference type="PROSITE" id="PS00295">
    <property type="entry name" value="ARRESTINS"/>
    <property type="match status" value="1"/>
</dbReference>
<organism>
    <name type="scientific">Aquarana catesbeiana</name>
    <name type="common">American bullfrog</name>
    <name type="synonym">Rana catesbeiana</name>
    <dbReference type="NCBI Taxonomy" id="8400"/>
    <lineage>
        <taxon>Eukaryota</taxon>
        <taxon>Metazoa</taxon>
        <taxon>Chordata</taxon>
        <taxon>Craniata</taxon>
        <taxon>Vertebrata</taxon>
        <taxon>Euteleostomi</taxon>
        <taxon>Amphibia</taxon>
        <taxon>Batrachia</taxon>
        <taxon>Anura</taxon>
        <taxon>Neobatrachia</taxon>
        <taxon>Ranoidea</taxon>
        <taxon>Ranidae</taxon>
        <taxon>Aquarana</taxon>
    </lineage>
</organism>
<name>ARRS_AQUCT</name>
<accession>P51478</accession>
<reference key="1">
    <citation type="journal article" date="1995" name="Eur. J. Biochem.">
        <title>The sequence of arrestins from rod and cone photoreceptors in the frogs Rana catesbeiana and Rana pipiens. Localization of gene transcripts by reverse-transcription polymerase chain reaction on isolated photoreceptors.</title>
        <authorList>
            <person name="Abdulaeva G."/>
            <person name="Hargrave P.A."/>
            <person name="Smith W.C."/>
        </authorList>
    </citation>
    <scope>NUCLEOTIDE SEQUENCE [MRNA]</scope>
    <source>
        <tissue>Retina</tissue>
    </source>
</reference>
<evidence type="ECO:0000305" key="1"/>
<proteinExistence type="evidence at transcript level"/>
<sequence>MSGDKKSRSVIYKKTSRDKAVSVYLGKRDYVDHIESVDPVDGVVFVDPDLLKGKKVYVTLTCAFRYGNEDIDVIGLTFRKDLFFARTQVYPPVEDVKCLTKVQERLMKKLGNNAYPFVMAFPDYLPCSVSLQPALSDVNKACGVDFEVKAFSASNLEDRYHKKNSVRLLIRKIQYAPDQPGPTPRAETSWQFFMSDKPLHLTASLAKEVFYHGETITVAVTVTNSSEKTVKKISTSVEQTANVVLYSSDFYTKTVAFDESDEKVSPKSTYKHTFTLLPLLAYNREKREIALDGKLKHEDTNLASSTLLKEGIDRTVMGILVDYKIKVTLTVSGLLGDMTSSEVSTELPFILMHPKPDSGAKESEQEEDFVFEDFARDQLKDELQPEEKEEEEEDEK</sequence>
<protein>
    <recommendedName>
        <fullName>S-arrestin</fullName>
    </recommendedName>
    <alternativeName>
        <fullName>Retinal S-antigen</fullName>
        <shortName>S-AG</shortName>
    </alternativeName>
    <alternativeName>
        <fullName>Rod photoreceptor arrestin</fullName>
    </alternativeName>
</protein>
<feature type="chain" id="PRO_0000205190" description="S-arrestin">
    <location>
        <begin position="1"/>
        <end position="396"/>
    </location>
</feature>
<keyword id="KW-0106">Calcium</keyword>
<keyword id="KW-0716">Sensory transduction</keyword>
<keyword id="KW-0844">Vision</keyword>
<comment type="function">
    <text>Arrestin is one of the major proteins of the ros (retinal rod outer segments); it binds to photoactivated-phosphorylated rhodopsin, thereby apparently preventing the transducin-mediated activation of phosphodiesterase.</text>
</comment>
<comment type="miscellaneous">
    <text>Arrestin binds calcium.</text>
</comment>
<comment type="similarity">
    <text evidence="1">Belongs to the arrestin family.</text>
</comment>